<sequence length="584" mass="63702">MEAQYRNHDGDTSFSSLRVYLNSLSDTPSRFSRRAVSVSTSYDEMSRVRAVSGEQMRRTLRWYDLIGLGIGGMIGAGVFVTTGRASRLYAGPSIVVSYAIAGLCALLSAFCYTEFAVHLPVAGGAFSYIRITFGEFPAFITGANLIMDYVLSNAAVSRGFTAYLGSAFGISTSEWRFIVSGLPNGFNEIDPIAVIVVLAVTFVICYSTRESSKVNMVLTALHIAFIVFVIVMGFSKGDVKNLTRPDNPENPSGFFPFGVSGVFNGAAMVYLSYIGYDAVSTMAEEVKDPVKDIPMGISGSVAIVIVLYCLMAISMSMLLPYDLIDAEAPYSAAFSKSEGWEWVTRVVGIGASFGILTSLIVAMLGQARYMCVIGRSRVVPIWFAKVHPKTSTPVNASAFLGIFTAVLALFTDLNVLLNLVSIGTLFVFYMVANAVIFRRYVTVGYTEPWPTLSFLCLFSITSILFTLVWQLAPSGPPKWFILGASTVTAIAIVQIFHCVVPQARIPEFWGVPLMPWTPCVSIFLNIFLLGSLDAPSYIRFGFFSGLVVLVYVFYSVHASYDAEGDGSLDFKDVESLERINRVLS</sequence>
<accession>Q9SQZ0</accession>
<comment type="function">
    <text evidence="1">Permease involved in the transport of the cationic amino acids.</text>
</comment>
<comment type="subcellular location">
    <subcellularLocation>
        <location evidence="3">Plastid</location>
        <location evidence="3">Chloroplast membrane</location>
        <topology evidence="3">Multi-pass membrane protein</topology>
    </subcellularLocation>
</comment>
<comment type="similarity">
    <text evidence="3">Belongs to the amino acid-polyamine-organocation (APC) superfamily. Cationic amino acid transporter (CAT) (TC 2.A.3.3) family.</text>
</comment>
<reference key="1">
    <citation type="journal article" date="2000" name="Nature">
        <title>Sequence and analysis of chromosome 3 of the plant Arabidopsis thaliana.</title>
        <authorList>
            <person name="Salanoubat M."/>
            <person name="Lemcke K."/>
            <person name="Rieger M."/>
            <person name="Ansorge W."/>
            <person name="Unseld M."/>
            <person name="Fartmann B."/>
            <person name="Valle G."/>
            <person name="Bloecker H."/>
            <person name="Perez-Alonso M."/>
            <person name="Obermaier B."/>
            <person name="Delseny M."/>
            <person name="Boutry M."/>
            <person name="Grivell L.A."/>
            <person name="Mache R."/>
            <person name="Puigdomenech P."/>
            <person name="De Simone V."/>
            <person name="Choisne N."/>
            <person name="Artiguenave F."/>
            <person name="Robert C."/>
            <person name="Brottier P."/>
            <person name="Wincker P."/>
            <person name="Cattolico L."/>
            <person name="Weissenbach J."/>
            <person name="Saurin W."/>
            <person name="Quetier F."/>
            <person name="Schaefer M."/>
            <person name="Mueller-Auer S."/>
            <person name="Gabel C."/>
            <person name="Fuchs M."/>
            <person name="Benes V."/>
            <person name="Wurmbach E."/>
            <person name="Drzonek H."/>
            <person name="Erfle H."/>
            <person name="Jordan N."/>
            <person name="Bangert S."/>
            <person name="Wiedelmann R."/>
            <person name="Kranz H."/>
            <person name="Voss H."/>
            <person name="Holland R."/>
            <person name="Brandt P."/>
            <person name="Nyakatura G."/>
            <person name="Vezzi A."/>
            <person name="D'Angelo M."/>
            <person name="Pallavicini A."/>
            <person name="Toppo S."/>
            <person name="Simionati B."/>
            <person name="Conrad A."/>
            <person name="Hornischer K."/>
            <person name="Kauer G."/>
            <person name="Loehnert T.-H."/>
            <person name="Nordsiek G."/>
            <person name="Reichelt J."/>
            <person name="Scharfe M."/>
            <person name="Schoen O."/>
            <person name="Bargues M."/>
            <person name="Terol J."/>
            <person name="Climent J."/>
            <person name="Navarro P."/>
            <person name="Collado C."/>
            <person name="Perez-Perez A."/>
            <person name="Ottenwaelder B."/>
            <person name="Duchemin D."/>
            <person name="Cooke R."/>
            <person name="Laudie M."/>
            <person name="Berger-Llauro C."/>
            <person name="Purnelle B."/>
            <person name="Masuy D."/>
            <person name="de Haan M."/>
            <person name="Maarse A.C."/>
            <person name="Alcaraz J.-P."/>
            <person name="Cottet A."/>
            <person name="Casacuberta E."/>
            <person name="Monfort A."/>
            <person name="Argiriou A."/>
            <person name="Flores M."/>
            <person name="Liguori R."/>
            <person name="Vitale D."/>
            <person name="Mannhaupt G."/>
            <person name="Haase D."/>
            <person name="Schoof H."/>
            <person name="Rudd S."/>
            <person name="Zaccaria P."/>
            <person name="Mewes H.-W."/>
            <person name="Mayer K.F.X."/>
            <person name="Kaul S."/>
            <person name="Town C.D."/>
            <person name="Koo H.L."/>
            <person name="Tallon L.J."/>
            <person name="Jenkins J."/>
            <person name="Rooney T."/>
            <person name="Rizzo M."/>
            <person name="Walts A."/>
            <person name="Utterback T."/>
            <person name="Fujii C.Y."/>
            <person name="Shea T.P."/>
            <person name="Creasy T.H."/>
            <person name="Haas B."/>
            <person name="Maiti R."/>
            <person name="Wu D."/>
            <person name="Peterson J."/>
            <person name="Van Aken S."/>
            <person name="Pai G."/>
            <person name="Militscher J."/>
            <person name="Sellers P."/>
            <person name="Gill J.E."/>
            <person name="Feldblyum T.V."/>
            <person name="Preuss D."/>
            <person name="Lin X."/>
            <person name="Nierman W.C."/>
            <person name="Salzberg S.L."/>
            <person name="White O."/>
            <person name="Venter J.C."/>
            <person name="Fraser C.M."/>
            <person name="Kaneko T."/>
            <person name="Nakamura Y."/>
            <person name="Sato S."/>
            <person name="Kato T."/>
            <person name="Asamizu E."/>
            <person name="Sasamoto S."/>
            <person name="Kimura T."/>
            <person name="Idesawa K."/>
            <person name="Kawashima K."/>
            <person name="Kishida Y."/>
            <person name="Kiyokawa C."/>
            <person name="Kohara M."/>
            <person name="Matsumoto M."/>
            <person name="Matsuno A."/>
            <person name="Muraki A."/>
            <person name="Nakayama S."/>
            <person name="Nakazaki N."/>
            <person name="Shinpo S."/>
            <person name="Takeuchi C."/>
            <person name="Wada T."/>
            <person name="Watanabe A."/>
            <person name="Yamada M."/>
            <person name="Yasuda M."/>
            <person name="Tabata S."/>
        </authorList>
    </citation>
    <scope>NUCLEOTIDE SEQUENCE [LARGE SCALE GENOMIC DNA]</scope>
    <source>
        <strain>cv. Columbia</strain>
    </source>
</reference>
<reference key="2">
    <citation type="journal article" date="2017" name="Plant J.">
        <title>Araport11: a complete reannotation of the Arabidopsis thaliana reference genome.</title>
        <authorList>
            <person name="Cheng C.Y."/>
            <person name="Krishnakumar V."/>
            <person name="Chan A.P."/>
            <person name="Thibaud-Nissen F."/>
            <person name="Schobel S."/>
            <person name="Town C.D."/>
        </authorList>
    </citation>
    <scope>GENOME REANNOTATION</scope>
    <source>
        <strain>cv. Columbia</strain>
    </source>
</reference>
<gene>
    <name type="primary">CAT7</name>
    <name type="ordered locus">At3g10600</name>
    <name type="ORF">F13M14.11</name>
    <name type="ORF">F18K10.21</name>
</gene>
<evidence type="ECO:0000250" key="1"/>
<evidence type="ECO:0000255" key="2"/>
<evidence type="ECO:0000305" key="3"/>
<dbReference type="EMBL" id="AC011560">
    <property type="protein sequence ID" value="AAG51376.1"/>
    <property type="molecule type" value="Genomic_DNA"/>
</dbReference>
<dbReference type="EMBL" id="AC013428">
    <property type="protein sequence ID" value="AAF76365.1"/>
    <property type="molecule type" value="Genomic_DNA"/>
</dbReference>
<dbReference type="EMBL" id="CP002686">
    <property type="protein sequence ID" value="AEE74933.1"/>
    <property type="molecule type" value="Genomic_DNA"/>
</dbReference>
<dbReference type="RefSeq" id="NP_187671.1">
    <property type="nucleotide sequence ID" value="NM_111896.2"/>
</dbReference>
<dbReference type="SMR" id="Q9SQZ0"/>
<dbReference type="BioGRID" id="5563">
    <property type="interactions" value="1"/>
</dbReference>
<dbReference type="FunCoup" id="Q9SQZ0">
    <property type="interactions" value="72"/>
</dbReference>
<dbReference type="IntAct" id="Q9SQZ0">
    <property type="interactions" value="1"/>
</dbReference>
<dbReference type="STRING" id="3702.Q9SQZ0"/>
<dbReference type="GlyGen" id="Q9SQZ0">
    <property type="glycosylation" value="1 site"/>
</dbReference>
<dbReference type="iPTMnet" id="Q9SQZ0"/>
<dbReference type="PaxDb" id="3702-AT3G10600.1"/>
<dbReference type="EnsemblPlants" id="AT3G10600.1">
    <property type="protein sequence ID" value="AT3G10600.1"/>
    <property type="gene ID" value="AT3G10600"/>
</dbReference>
<dbReference type="GeneID" id="820229"/>
<dbReference type="Gramene" id="AT3G10600.1">
    <property type="protein sequence ID" value="AT3G10600.1"/>
    <property type="gene ID" value="AT3G10600"/>
</dbReference>
<dbReference type="KEGG" id="ath:AT3G10600"/>
<dbReference type="Araport" id="AT3G10600"/>
<dbReference type="TAIR" id="AT3G10600">
    <property type="gene designation" value="CAT7"/>
</dbReference>
<dbReference type="eggNOG" id="KOG1286">
    <property type="taxonomic scope" value="Eukaryota"/>
</dbReference>
<dbReference type="HOGENOM" id="CLU_007946_15_9_1"/>
<dbReference type="InParanoid" id="Q9SQZ0"/>
<dbReference type="OMA" id="TFIICYS"/>
<dbReference type="PhylomeDB" id="Q9SQZ0"/>
<dbReference type="PRO" id="PR:Q9SQZ0"/>
<dbReference type="Proteomes" id="UP000006548">
    <property type="component" value="Chromosome 3"/>
</dbReference>
<dbReference type="ExpressionAtlas" id="Q9SQZ0">
    <property type="expression patterns" value="baseline and differential"/>
</dbReference>
<dbReference type="GO" id="GO:0031969">
    <property type="term" value="C:chloroplast membrane"/>
    <property type="evidence" value="ECO:0007669"/>
    <property type="project" value="UniProtKB-SubCell"/>
</dbReference>
<dbReference type="GO" id="GO:0022857">
    <property type="term" value="F:transmembrane transporter activity"/>
    <property type="evidence" value="ECO:0007669"/>
    <property type="project" value="InterPro"/>
</dbReference>
<dbReference type="GO" id="GO:0006865">
    <property type="term" value="P:amino acid transport"/>
    <property type="evidence" value="ECO:0007669"/>
    <property type="project" value="UniProtKB-KW"/>
</dbReference>
<dbReference type="Gene3D" id="1.20.1740.10">
    <property type="entry name" value="Amino acid/polyamine transporter I"/>
    <property type="match status" value="1"/>
</dbReference>
<dbReference type="InterPro" id="IPR002293">
    <property type="entry name" value="AA/rel_permease1"/>
</dbReference>
<dbReference type="InterPro" id="IPR029485">
    <property type="entry name" value="CAT_C"/>
</dbReference>
<dbReference type="PANTHER" id="PTHR43243:SF41">
    <property type="entry name" value="CATIONIC AMINO ACID TRANSPORTER 7, CHLOROPLASTIC"/>
    <property type="match status" value="1"/>
</dbReference>
<dbReference type="PANTHER" id="PTHR43243">
    <property type="entry name" value="INNER MEMBRANE TRANSPORTER YGJI-RELATED"/>
    <property type="match status" value="1"/>
</dbReference>
<dbReference type="Pfam" id="PF13520">
    <property type="entry name" value="AA_permease_2"/>
    <property type="match status" value="1"/>
</dbReference>
<dbReference type="Pfam" id="PF13906">
    <property type="entry name" value="AA_permease_C"/>
    <property type="match status" value="1"/>
</dbReference>
<organism>
    <name type="scientific">Arabidopsis thaliana</name>
    <name type="common">Mouse-ear cress</name>
    <dbReference type="NCBI Taxonomy" id="3702"/>
    <lineage>
        <taxon>Eukaryota</taxon>
        <taxon>Viridiplantae</taxon>
        <taxon>Streptophyta</taxon>
        <taxon>Embryophyta</taxon>
        <taxon>Tracheophyta</taxon>
        <taxon>Spermatophyta</taxon>
        <taxon>Magnoliopsida</taxon>
        <taxon>eudicotyledons</taxon>
        <taxon>Gunneridae</taxon>
        <taxon>Pentapetalae</taxon>
        <taxon>rosids</taxon>
        <taxon>malvids</taxon>
        <taxon>Brassicales</taxon>
        <taxon>Brassicaceae</taxon>
        <taxon>Camelineae</taxon>
        <taxon>Arabidopsis</taxon>
    </lineage>
</organism>
<name>CAAT7_ARATH</name>
<keyword id="KW-0029">Amino-acid transport</keyword>
<keyword id="KW-0150">Chloroplast</keyword>
<keyword id="KW-0472">Membrane</keyword>
<keyword id="KW-0934">Plastid</keyword>
<keyword id="KW-1185">Reference proteome</keyword>
<keyword id="KW-0809">Transit peptide</keyword>
<keyword id="KW-0812">Transmembrane</keyword>
<keyword id="KW-1133">Transmembrane helix</keyword>
<keyword id="KW-0813">Transport</keyword>
<feature type="transit peptide" description="Chloroplast" evidence="2">
    <location>
        <begin position="1"/>
        <end position="49"/>
    </location>
</feature>
<feature type="chain" id="PRO_0000415783" description="Cationic amino acid transporter 7, chloroplastic">
    <location>
        <begin position="50"/>
        <end position="584"/>
    </location>
</feature>
<feature type="transmembrane region" description="Helical" evidence="2">
    <location>
        <begin position="62"/>
        <end position="82"/>
    </location>
</feature>
<feature type="transmembrane region" description="Helical" evidence="2">
    <location>
        <begin position="90"/>
        <end position="110"/>
    </location>
</feature>
<feature type="transmembrane region" description="Helical" evidence="2">
    <location>
        <begin position="131"/>
        <end position="151"/>
    </location>
</feature>
<feature type="transmembrane region" description="Helical" evidence="2">
    <location>
        <begin position="185"/>
        <end position="205"/>
    </location>
</feature>
<feature type="transmembrane region" description="Helical" evidence="2">
    <location>
        <begin position="214"/>
        <end position="234"/>
    </location>
</feature>
<feature type="transmembrane region" description="Helical" evidence="2">
    <location>
        <begin position="254"/>
        <end position="274"/>
    </location>
</feature>
<feature type="transmembrane region" description="Helical" evidence="2">
    <location>
        <begin position="293"/>
        <end position="313"/>
    </location>
</feature>
<feature type="transmembrane region" description="Helical" evidence="2">
    <location>
        <begin position="346"/>
        <end position="366"/>
    </location>
</feature>
<feature type="transmembrane region" description="Helical" evidence="2">
    <location>
        <begin position="396"/>
        <end position="416"/>
    </location>
</feature>
<feature type="transmembrane region" description="Helical" evidence="2">
    <location>
        <begin position="417"/>
        <end position="437"/>
    </location>
</feature>
<feature type="transmembrane region" description="Helical" evidence="2">
    <location>
        <begin position="449"/>
        <end position="469"/>
    </location>
</feature>
<feature type="transmembrane region" description="Helical" evidence="2">
    <location>
        <begin position="480"/>
        <end position="500"/>
    </location>
</feature>
<feature type="transmembrane region" description="Helical" evidence="2">
    <location>
        <begin position="508"/>
        <end position="528"/>
    </location>
</feature>
<feature type="transmembrane region" description="Helical" evidence="2">
    <location>
        <begin position="540"/>
        <end position="560"/>
    </location>
</feature>
<proteinExistence type="inferred from homology"/>
<protein>
    <recommendedName>
        <fullName>Cationic amino acid transporter 7, chloroplastic</fullName>
    </recommendedName>
</protein>